<feature type="chain" id="PRO_1000004171" description="Large ribosomal subunit protein bL33">
    <location>
        <begin position="1"/>
        <end position="56"/>
    </location>
</feature>
<evidence type="ECO:0000255" key="1">
    <source>
        <dbReference type="HAMAP-Rule" id="MF_00294"/>
    </source>
</evidence>
<evidence type="ECO:0000305" key="2"/>
<accession>A5UDB8</accession>
<protein>
    <recommendedName>
        <fullName evidence="1">Large ribosomal subunit protein bL33</fullName>
    </recommendedName>
    <alternativeName>
        <fullName evidence="2">50S ribosomal protein L33</fullName>
    </alternativeName>
</protein>
<keyword id="KW-0687">Ribonucleoprotein</keyword>
<keyword id="KW-0689">Ribosomal protein</keyword>
<gene>
    <name evidence="1" type="primary">rpmG</name>
    <name type="ordered locus">CGSHiEE_07210</name>
</gene>
<proteinExistence type="inferred from homology"/>
<sequence length="56" mass="6563">MAAKGAREKIRLVSTAETGHFYTTDKNKRNMPEKMEIKKFDPVVRKHVIYKEAKIK</sequence>
<comment type="similarity">
    <text evidence="1">Belongs to the bacterial ribosomal protein bL33 family.</text>
</comment>
<name>RL33_HAEIE</name>
<dbReference type="EMBL" id="CP000671">
    <property type="protein sequence ID" value="ABQ98769.1"/>
    <property type="molecule type" value="Genomic_DNA"/>
</dbReference>
<dbReference type="SMR" id="A5UDB8"/>
<dbReference type="KEGG" id="hip:CGSHiEE_07210"/>
<dbReference type="HOGENOM" id="CLU_190949_1_1_6"/>
<dbReference type="GO" id="GO:0022625">
    <property type="term" value="C:cytosolic large ribosomal subunit"/>
    <property type="evidence" value="ECO:0007669"/>
    <property type="project" value="TreeGrafter"/>
</dbReference>
<dbReference type="GO" id="GO:0003735">
    <property type="term" value="F:structural constituent of ribosome"/>
    <property type="evidence" value="ECO:0007669"/>
    <property type="project" value="InterPro"/>
</dbReference>
<dbReference type="GO" id="GO:0006412">
    <property type="term" value="P:translation"/>
    <property type="evidence" value="ECO:0007669"/>
    <property type="project" value="UniProtKB-UniRule"/>
</dbReference>
<dbReference type="FunFam" id="2.20.28.120:FF:000001">
    <property type="entry name" value="50S ribosomal protein L33"/>
    <property type="match status" value="1"/>
</dbReference>
<dbReference type="Gene3D" id="2.20.28.120">
    <property type="entry name" value="Ribosomal protein L33"/>
    <property type="match status" value="1"/>
</dbReference>
<dbReference type="HAMAP" id="MF_00294">
    <property type="entry name" value="Ribosomal_bL33"/>
    <property type="match status" value="1"/>
</dbReference>
<dbReference type="InterPro" id="IPR001705">
    <property type="entry name" value="Ribosomal_bL33"/>
</dbReference>
<dbReference type="InterPro" id="IPR018264">
    <property type="entry name" value="Ribosomal_bL33_CS"/>
</dbReference>
<dbReference type="InterPro" id="IPR038584">
    <property type="entry name" value="Ribosomal_bL33_sf"/>
</dbReference>
<dbReference type="InterPro" id="IPR011332">
    <property type="entry name" value="Ribosomal_zn-bd"/>
</dbReference>
<dbReference type="NCBIfam" id="NF001860">
    <property type="entry name" value="PRK00595.1"/>
    <property type="match status" value="1"/>
</dbReference>
<dbReference type="NCBIfam" id="TIGR01023">
    <property type="entry name" value="rpmG_bact"/>
    <property type="match status" value="1"/>
</dbReference>
<dbReference type="PANTHER" id="PTHR15238">
    <property type="entry name" value="54S RIBOSOMAL PROTEIN L39, MITOCHONDRIAL"/>
    <property type="match status" value="1"/>
</dbReference>
<dbReference type="PANTHER" id="PTHR15238:SF1">
    <property type="entry name" value="LARGE RIBOSOMAL SUBUNIT PROTEIN BL33M"/>
    <property type="match status" value="1"/>
</dbReference>
<dbReference type="Pfam" id="PF00471">
    <property type="entry name" value="Ribosomal_L33"/>
    <property type="match status" value="1"/>
</dbReference>
<dbReference type="SUPFAM" id="SSF57829">
    <property type="entry name" value="Zn-binding ribosomal proteins"/>
    <property type="match status" value="1"/>
</dbReference>
<dbReference type="PROSITE" id="PS00582">
    <property type="entry name" value="RIBOSOMAL_L33"/>
    <property type="match status" value="1"/>
</dbReference>
<organism>
    <name type="scientific">Haemophilus influenzae (strain PittEE)</name>
    <dbReference type="NCBI Taxonomy" id="374930"/>
    <lineage>
        <taxon>Bacteria</taxon>
        <taxon>Pseudomonadati</taxon>
        <taxon>Pseudomonadota</taxon>
        <taxon>Gammaproteobacteria</taxon>
        <taxon>Pasteurellales</taxon>
        <taxon>Pasteurellaceae</taxon>
        <taxon>Haemophilus</taxon>
    </lineage>
</organism>
<reference key="1">
    <citation type="journal article" date="2007" name="Genome Biol.">
        <title>Characterization and modeling of the Haemophilus influenzae core and supragenomes based on the complete genomic sequences of Rd and 12 clinical nontypeable strains.</title>
        <authorList>
            <person name="Hogg J.S."/>
            <person name="Hu F.Z."/>
            <person name="Janto B."/>
            <person name="Boissy R."/>
            <person name="Hayes J."/>
            <person name="Keefe R."/>
            <person name="Post J.C."/>
            <person name="Ehrlich G.D."/>
        </authorList>
    </citation>
    <scope>NUCLEOTIDE SEQUENCE [LARGE SCALE GENOMIC DNA]</scope>
    <source>
        <strain>PittEE</strain>
    </source>
</reference>